<dbReference type="EMBL" id="AF116897">
    <property type="protein sequence ID" value="AAD20947.1"/>
    <property type="status" value="ALT_FRAME"/>
    <property type="molecule type" value="mRNA"/>
</dbReference>
<dbReference type="EMBL" id="AF119821">
    <property type="protein sequence ID" value="AAD25372.1"/>
    <property type="molecule type" value="mRNA"/>
</dbReference>
<dbReference type="EMBL" id="AH007542">
    <property type="protein sequence ID" value="AAD22476.1"/>
    <property type="molecule type" value="Genomic_DNA"/>
</dbReference>
<dbReference type="EMBL" id="AL833771">
    <property type="status" value="NOT_ANNOTATED_CDS"/>
    <property type="molecule type" value="Genomic_DNA"/>
</dbReference>
<dbReference type="EMBL" id="CH466519">
    <property type="protein sequence ID" value="EDL28292.1"/>
    <property type="molecule type" value="Genomic_DNA"/>
</dbReference>
<dbReference type="CCDS" id="CCDS16751.1"/>
<dbReference type="RefSeq" id="NP_033860.2">
    <property type="nucleotide sequence ID" value="NM_009730.3"/>
</dbReference>
<dbReference type="SMR" id="Q9WU60"/>
<dbReference type="BioGRID" id="198278">
    <property type="interactions" value="1"/>
</dbReference>
<dbReference type="FunCoup" id="Q9WU60">
    <property type="interactions" value="2064"/>
</dbReference>
<dbReference type="IntAct" id="Q9WU60">
    <property type="interactions" value="1"/>
</dbReference>
<dbReference type="MINT" id="Q9WU60"/>
<dbReference type="STRING" id="10090.ENSMUSP00000028781"/>
<dbReference type="GlyConnect" id="2145">
    <property type="glycosylation" value="10 N-Linked glycans (8 sites)"/>
</dbReference>
<dbReference type="GlyCosmos" id="Q9WU60">
    <property type="glycosylation" value="25 sites, 10 glycans"/>
</dbReference>
<dbReference type="GlyGen" id="Q9WU60">
    <property type="glycosylation" value="26 sites, 17 N-linked glycans (12 sites), 1 O-linked glycan (1 site)"/>
</dbReference>
<dbReference type="iPTMnet" id="Q9WU60"/>
<dbReference type="PhosphoSitePlus" id="Q9WU60"/>
<dbReference type="SwissPalm" id="Q9WU60"/>
<dbReference type="PaxDb" id="10090-ENSMUSP00000028781"/>
<dbReference type="ProteomicsDB" id="277219"/>
<dbReference type="Pumba" id="Q9WU60"/>
<dbReference type="Antibodypedia" id="2265">
    <property type="antibodies" value="243 antibodies from 30 providers"/>
</dbReference>
<dbReference type="DNASU" id="11990"/>
<dbReference type="Ensembl" id="ENSMUST00000028781.9">
    <property type="protein sequence ID" value="ENSMUSP00000028781.9"/>
    <property type="gene ID" value="ENSMUSG00000027312.15"/>
</dbReference>
<dbReference type="GeneID" id="11990"/>
<dbReference type="KEGG" id="mmu:11990"/>
<dbReference type="UCSC" id="uc008mkc.1">
    <property type="organism name" value="mouse"/>
</dbReference>
<dbReference type="AGR" id="MGI:1341628"/>
<dbReference type="CTD" id="8455"/>
<dbReference type="MGI" id="MGI:1341628">
    <property type="gene designation" value="Atrn"/>
</dbReference>
<dbReference type="VEuPathDB" id="HostDB:ENSMUSG00000027312"/>
<dbReference type="eggNOG" id="KOG1388">
    <property type="taxonomic scope" value="Eukaryota"/>
</dbReference>
<dbReference type="GeneTree" id="ENSGT00940000157346"/>
<dbReference type="HOGENOM" id="CLU_003930_0_0_1"/>
<dbReference type="InParanoid" id="Q9WU60"/>
<dbReference type="OMA" id="MNGCPSD"/>
<dbReference type="OrthoDB" id="9998912at2759"/>
<dbReference type="PhylomeDB" id="Q9WU60"/>
<dbReference type="TreeFam" id="TF321873"/>
<dbReference type="BioGRID-ORCS" id="11990">
    <property type="hits" value="4 hits in 80 CRISPR screens"/>
</dbReference>
<dbReference type="ChiTaRS" id="Atrn">
    <property type="organism name" value="mouse"/>
</dbReference>
<dbReference type="PRO" id="PR:Q9WU60"/>
<dbReference type="Proteomes" id="UP000000589">
    <property type="component" value="Chromosome 2"/>
</dbReference>
<dbReference type="RNAct" id="Q9WU60">
    <property type="molecule type" value="protein"/>
</dbReference>
<dbReference type="Bgee" id="ENSMUSG00000027312">
    <property type="expression patterns" value="Expressed in urinary bladder urothelium and 234 other cell types or tissues"/>
</dbReference>
<dbReference type="GO" id="GO:0005615">
    <property type="term" value="C:extracellular space"/>
    <property type="evidence" value="ECO:0007669"/>
    <property type="project" value="Ensembl"/>
</dbReference>
<dbReference type="GO" id="GO:0005886">
    <property type="term" value="C:plasma membrane"/>
    <property type="evidence" value="ECO:0007669"/>
    <property type="project" value="UniProtKB-SubCell"/>
</dbReference>
<dbReference type="GO" id="GO:0030246">
    <property type="term" value="F:carbohydrate binding"/>
    <property type="evidence" value="ECO:0007669"/>
    <property type="project" value="UniProtKB-KW"/>
</dbReference>
<dbReference type="GO" id="GO:0038023">
    <property type="term" value="F:signaling receptor activity"/>
    <property type="evidence" value="ECO:0000353"/>
    <property type="project" value="MGI"/>
</dbReference>
<dbReference type="GO" id="GO:0021549">
    <property type="term" value="P:cerebellum development"/>
    <property type="evidence" value="ECO:0000315"/>
    <property type="project" value="MGI"/>
</dbReference>
<dbReference type="GO" id="GO:0006954">
    <property type="term" value="P:inflammatory response"/>
    <property type="evidence" value="ECO:0007669"/>
    <property type="project" value="UniProtKB-KW"/>
</dbReference>
<dbReference type="GO" id="GO:0042552">
    <property type="term" value="P:myelination"/>
    <property type="evidence" value="ECO:0000315"/>
    <property type="project" value="MGI"/>
</dbReference>
<dbReference type="GO" id="GO:0043473">
    <property type="term" value="P:pigmentation"/>
    <property type="evidence" value="ECO:0000315"/>
    <property type="project" value="MGI"/>
</dbReference>
<dbReference type="GO" id="GO:0040014">
    <property type="term" value="P:regulation of multicellular organism growth"/>
    <property type="evidence" value="ECO:0000315"/>
    <property type="project" value="MGI"/>
</dbReference>
<dbReference type="CDD" id="cd00041">
    <property type="entry name" value="CUB"/>
    <property type="match status" value="1"/>
</dbReference>
<dbReference type="CDD" id="cd00055">
    <property type="entry name" value="EGF_Lam"/>
    <property type="match status" value="3"/>
</dbReference>
<dbReference type="FunFam" id="2.120.10.80:FF:000034">
    <property type="entry name" value="Attractin"/>
    <property type="match status" value="1"/>
</dbReference>
<dbReference type="FunFam" id="3.10.100.10:FF:000012">
    <property type="entry name" value="Attractin"/>
    <property type="match status" value="1"/>
</dbReference>
<dbReference type="FunFam" id="2.120.10.80:FF:000031">
    <property type="entry name" value="attractin"/>
    <property type="match status" value="1"/>
</dbReference>
<dbReference type="FunFam" id="2.10.25.10:FF:000079">
    <property type="entry name" value="Attractin like 1"/>
    <property type="match status" value="1"/>
</dbReference>
<dbReference type="FunFam" id="2.60.120.290:FF:000008">
    <property type="entry name" value="Attractin like 1"/>
    <property type="match status" value="1"/>
</dbReference>
<dbReference type="Gene3D" id="2.120.10.80">
    <property type="entry name" value="Kelch-type beta propeller"/>
    <property type="match status" value="2"/>
</dbReference>
<dbReference type="Gene3D" id="2.10.25.10">
    <property type="entry name" value="Laminin"/>
    <property type="match status" value="3"/>
</dbReference>
<dbReference type="Gene3D" id="3.10.100.10">
    <property type="entry name" value="Mannose-Binding Protein A, subunit A"/>
    <property type="match status" value="1"/>
</dbReference>
<dbReference type="Gene3D" id="2.60.120.290">
    <property type="entry name" value="Spermadhesin, CUB domain"/>
    <property type="match status" value="1"/>
</dbReference>
<dbReference type="InterPro" id="IPR056737">
    <property type="entry name" value="Beta-prop_ATRN-MKLN-like"/>
</dbReference>
<dbReference type="InterPro" id="IPR001304">
    <property type="entry name" value="C-type_lectin-like"/>
</dbReference>
<dbReference type="InterPro" id="IPR016186">
    <property type="entry name" value="C-type_lectin-like/link_sf"/>
</dbReference>
<dbReference type="InterPro" id="IPR016187">
    <property type="entry name" value="CTDL_fold"/>
</dbReference>
<dbReference type="InterPro" id="IPR000859">
    <property type="entry name" value="CUB_dom"/>
</dbReference>
<dbReference type="InterPro" id="IPR000742">
    <property type="entry name" value="EGF-like_dom"/>
</dbReference>
<dbReference type="InterPro" id="IPR011043">
    <property type="entry name" value="Gal_Oxase/kelch_b-propeller"/>
</dbReference>
<dbReference type="InterPro" id="IPR056732">
    <property type="entry name" value="GBD_ATRN"/>
</dbReference>
<dbReference type="InterPro" id="IPR015915">
    <property type="entry name" value="Kelch-typ_b-propeller"/>
</dbReference>
<dbReference type="InterPro" id="IPR002049">
    <property type="entry name" value="LE_dom"/>
</dbReference>
<dbReference type="InterPro" id="IPR056863">
    <property type="entry name" value="LMN_ATRN_NET-like_EGF"/>
</dbReference>
<dbReference type="InterPro" id="IPR051568">
    <property type="entry name" value="LZTR1/Attractin"/>
</dbReference>
<dbReference type="InterPro" id="IPR002165">
    <property type="entry name" value="Plexin_repeat"/>
</dbReference>
<dbReference type="InterPro" id="IPR016201">
    <property type="entry name" value="PSI"/>
</dbReference>
<dbReference type="InterPro" id="IPR035914">
    <property type="entry name" value="Sperma_CUB_dom_sf"/>
</dbReference>
<dbReference type="PANTHER" id="PTHR46376:SF3">
    <property type="entry name" value="ATTRACTIN"/>
    <property type="match status" value="1"/>
</dbReference>
<dbReference type="PANTHER" id="PTHR46376">
    <property type="entry name" value="LEUCINE-ZIPPER-LIKE TRANSCRIPTIONAL REGULATOR 1"/>
    <property type="match status" value="1"/>
</dbReference>
<dbReference type="Pfam" id="PF24981">
    <property type="entry name" value="Beta-prop_ATRN-LZTR1"/>
    <property type="match status" value="1"/>
</dbReference>
<dbReference type="Pfam" id="PF00431">
    <property type="entry name" value="CUB"/>
    <property type="match status" value="1"/>
</dbReference>
<dbReference type="Pfam" id="PF24973">
    <property type="entry name" value="EGF_LMN_ATRN"/>
    <property type="match status" value="1"/>
</dbReference>
<dbReference type="Pfam" id="PF23106">
    <property type="entry name" value="EGF_Teneurin"/>
    <property type="match status" value="1"/>
</dbReference>
<dbReference type="Pfam" id="PF24972">
    <property type="entry name" value="GBD_ATRN"/>
    <property type="match status" value="1"/>
</dbReference>
<dbReference type="Pfam" id="PF00059">
    <property type="entry name" value="Lectin_C"/>
    <property type="match status" value="1"/>
</dbReference>
<dbReference type="Pfam" id="PF01437">
    <property type="entry name" value="PSI"/>
    <property type="match status" value="2"/>
</dbReference>
<dbReference type="SMART" id="SM00034">
    <property type="entry name" value="CLECT"/>
    <property type="match status" value="1"/>
</dbReference>
<dbReference type="SMART" id="SM00042">
    <property type="entry name" value="CUB"/>
    <property type="match status" value="1"/>
</dbReference>
<dbReference type="SMART" id="SM00181">
    <property type="entry name" value="EGF"/>
    <property type="match status" value="3"/>
</dbReference>
<dbReference type="SMART" id="SM00180">
    <property type="entry name" value="EGF_Lam"/>
    <property type="match status" value="2"/>
</dbReference>
<dbReference type="SMART" id="SM00423">
    <property type="entry name" value="PSI"/>
    <property type="match status" value="5"/>
</dbReference>
<dbReference type="SUPFAM" id="SSF56436">
    <property type="entry name" value="C-type lectin-like"/>
    <property type="match status" value="1"/>
</dbReference>
<dbReference type="SUPFAM" id="SSF57196">
    <property type="entry name" value="EGF/Laminin"/>
    <property type="match status" value="1"/>
</dbReference>
<dbReference type="SUPFAM" id="SSF50965">
    <property type="entry name" value="Galactose oxidase, central domain"/>
    <property type="match status" value="1"/>
</dbReference>
<dbReference type="SUPFAM" id="SSF49854">
    <property type="entry name" value="Spermadhesin, CUB domain"/>
    <property type="match status" value="1"/>
</dbReference>
<dbReference type="PROSITE" id="PS50041">
    <property type="entry name" value="C_TYPE_LECTIN_2"/>
    <property type="match status" value="1"/>
</dbReference>
<dbReference type="PROSITE" id="PS01180">
    <property type="entry name" value="CUB"/>
    <property type="match status" value="1"/>
</dbReference>
<dbReference type="PROSITE" id="PS00022">
    <property type="entry name" value="EGF_1"/>
    <property type="match status" value="3"/>
</dbReference>
<dbReference type="PROSITE" id="PS01186">
    <property type="entry name" value="EGF_2"/>
    <property type="match status" value="1"/>
</dbReference>
<dbReference type="PROSITE" id="PS50026">
    <property type="entry name" value="EGF_3"/>
    <property type="match status" value="2"/>
</dbReference>
<dbReference type="PROSITE" id="PS01248">
    <property type="entry name" value="EGF_LAM_1"/>
    <property type="match status" value="1"/>
</dbReference>
<dbReference type="PROSITE" id="PS50027">
    <property type="entry name" value="EGF_LAM_2"/>
    <property type="match status" value="3"/>
</dbReference>
<sequence>MVAVAAAAATEARLRGSTTATAAPAGRKGRQHRPCTATGAWRPGPRARLCLPRVLSRALPPPPLLPLLFSLLLLPLPREAEAAAVAAAVSGSAAAEAKECDRPCVNGGRCNPGTGQCVCPTGWVGEQCQHCGGRFRLTGSSGFVTDGPGNYKYKTKCTWLIEGQPNRIMRLRFNHFATECSWDHLYVYDGDSIYAPLIAAFSGLIVPERDGNETAPEVTVTSGYALLHFFSDAAYNLTGFNITYNFDMCPNNCSGRGECKSSNSSSAVECECSENWKGESCDIPHCTDNCGFPHRGICNASDTRGCSCFPHWQGPGCSIPVPANQSFWTREEYSDLKLPRASHKAVVNGNIMWVVGGYMFNHSDYSMVLAYDLTSREWLPLNHSVNSVVVRYGHSLALHKDKIYMYGGKIDSTGNVTNELRVFHIHNESWVLLTPKAKDQYAVVGHSAHIVTLASGRVVMLVIFGHCPLYGYISVVQEYDLEKNTWSILHTQGALVQGGYGHSSVYDDRTKALYVHGGYKAFSANKYRLADDLYRYDVDTQMWTILKDSRFFRYLHTAVIVSGTMLVFGGNTHNDTSMSHGAKCFSSDFMAYDIACDRWSVLPRPELHHDVNRFGHSAVLYNSTMYVFGGFNSLLLSDVLVFTSEQCDAHRSEAACVAAGPGIRCLWDTQSSRCTSWELATEEQAEKLKSECFSKRTLDHDRCDQHTDCYSCTANTNDCHWCNDHCVPVNHSCTEGQISIAKYESCPKDNPMYYCNKKTSCRSCALDQNCQWEPRNQECIALPENICGNGWHLVGNSCLKITTAKENYDNAKLSCRNHNAFLASLTSQKKVEFVLKQLRLMQSSQSMSKLTLTPWVGLRKINVSYWCWEDMSPFTNSLLQWMPSEPSDAGFCGILSEPSTRGLKAATCINPLNGSVCERPANHSAKQCRTPCALRTACGECTSSSSECMWCSNMKQCVDSNAYVASFPFGQCMEWYTMSSCPPENCSGYCTCSHCLEQPGCGWCTDPSNTGKGKCIEGSYKGPVKMPSQASAGNVYPQPLLNSSMCLEDSRYNWSFIHCPACQCNGHSKCINQSICEKCEDLTTGKHCETCISGFYGDPTNGGKCQPCKCNGHASLCNTNTGKCFCTTKGVKGDECQLCEVENRYQGNPLKGTCYYTLLIDYQFTFSLSQEDDRYYTAINFVATPDEQNRDLDMFINASKNFNLNITWATSFPAGTQTGEEVPVVSKTNIKEYKDSFSNEKFDFRNHPNITFFVYVSNFTWPIKIQIAFSQHSNFMDLVQFFVTFFSCFLSLLLVAAVVWKIKQSCWASRRREQLLREMQQMASRPFASVNVALETDEEPPDLIGGSIKTVPKPIALEPCFGNKAAVLSVFVRLPRGLGGIPPPGQSGLAVASALVDISQQMPIVYKEKSGAVRNRKQQPPAQPGTCI</sequence>
<accession>Q9WU60</accession>
<accession>A2AP43</accession>
<accession>Q9R263</accession>
<accession>Q9WU77</accession>
<organism>
    <name type="scientific">Mus musculus</name>
    <name type="common">Mouse</name>
    <dbReference type="NCBI Taxonomy" id="10090"/>
    <lineage>
        <taxon>Eukaryota</taxon>
        <taxon>Metazoa</taxon>
        <taxon>Chordata</taxon>
        <taxon>Craniata</taxon>
        <taxon>Vertebrata</taxon>
        <taxon>Euteleostomi</taxon>
        <taxon>Mammalia</taxon>
        <taxon>Eutheria</taxon>
        <taxon>Euarchontoglires</taxon>
        <taxon>Glires</taxon>
        <taxon>Rodentia</taxon>
        <taxon>Myomorpha</taxon>
        <taxon>Muroidea</taxon>
        <taxon>Muridae</taxon>
        <taxon>Murinae</taxon>
        <taxon>Mus</taxon>
        <taxon>Mus</taxon>
    </lineage>
</organism>
<evidence type="ECO:0000250" key="1"/>
<evidence type="ECO:0000250" key="2">
    <source>
        <dbReference type="UniProtKB" id="O75882"/>
    </source>
</evidence>
<evidence type="ECO:0000255" key="3"/>
<evidence type="ECO:0000255" key="4">
    <source>
        <dbReference type="PROSITE-ProRule" id="PRU00040"/>
    </source>
</evidence>
<evidence type="ECO:0000255" key="5">
    <source>
        <dbReference type="PROSITE-ProRule" id="PRU00059"/>
    </source>
</evidence>
<evidence type="ECO:0000255" key="6">
    <source>
        <dbReference type="PROSITE-ProRule" id="PRU00076"/>
    </source>
</evidence>
<evidence type="ECO:0000255" key="7">
    <source>
        <dbReference type="PROSITE-ProRule" id="PRU00460"/>
    </source>
</evidence>
<evidence type="ECO:0000256" key="8">
    <source>
        <dbReference type="SAM" id="MobiDB-lite"/>
    </source>
</evidence>
<evidence type="ECO:0000269" key="9">
    <source>
    </source>
</evidence>
<evidence type="ECO:0000305" key="10"/>
<keyword id="KW-1003">Cell membrane</keyword>
<keyword id="KW-1015">Disulfide bond</keyword>
<keyword id="KW-0245">EGF-like domain</keyword>
<keyword id="KW-0325">Glycoprotein</keyword>
<keyword id="KW-0395">Inflammatory response</keyword>
<keyword id="KW-0880">Kelch repeat</keyword>
<keyword id="KW-0424">Laminin EGF-like domain</keyword>
<keyword id="KW-0430">Lectin</keyword>
<keyword id="KW-0472">Membrane</keyword>
<keyword id="KW-0675">Receptor</keyword>
<keyword id="KW-1185">Reference proteome</keyword>
<keyword id="KW-0677">Repeat</keyword>
<keyword id="KW-0732">Signal</keyword>
<keyword id="KW-0812">Transmembrane</keyword>
<keyword id="KW-1133">Transmembrane helix</keyword>
<name>ATRN_MOUSE</name>
<gene>
    <name type="primary">Atrn</name>
    <name type="synonym">Mg</name>
    <name type="synonym">Mgca</name>
</gene>
<feature type="signal peptide" evidence="3">
    <location>
        <begin position="1"/>
        <end position="22"/>
    </location>
</feature>
<feature type="propeptide" id="PRO_0000394772" evidence="1">
    <location>
        <begin position="23"/>
        <end position="82"/>
    </location>
</feature>
<feature type="chain" id="PRO_0000007484" description="Attractin">
    <location>
        <begin position="83"/>
        <end position="1428"/>
    </location>
</feature>
<feature type="topological domain" description="Extracellular" evidence="3">
    <location>
        <begin position="83"/>
        <end position="1278"/>
    </location>
</feature>
<feature type="transmembrane region" description="Helical" evidence="3">
    <location>
        <begin position="1279"/>
        <end position="1299"/>
    </location>
</feature>
<feature type="topological domain" description="Cytoplasmic" evidence="3">
    <location>
        <begin position="1300"/>
        <end position="1428"/>
    </location>
</feature>
<feature type="domain" description="EGF-like" evidence="6">
    <location>
        <begin position="100"/>
        <end position="128"/>
    </location>
</feature>
<feature type="domain" description="CUB" evidence="5">
    <location>
        <begin position="131"/>
        <end position="247"/>
    </location>
</feature>
<feature type="repeat" description="Kelch 1">
    <location>
        <begin position="351"/>
        <end position="401"/>
    </location>
</feature>
<feature type="repeat" description="Kelch 2">
    <location>
        <begin position="402"/>
        <end position="450"/>
    </location>
</feature>
<feature type="repeat" description="Kelch 3">
    <location>
        <begin position="460"/>
        <end position="507"/>
    </location>
</feature>
<feature type="repeat" description="Kelch 4">
    <location>
        <begin position="512"/>
        <end position="563"/>
    </location>
</feature>
<feature type="repeat" description="Kelch 5">
    <location>
        <begin position="565"/>
        <end position="623"/>
    </location>
</feature>
<feature type="repeat" description="Kelch 6">
    <location>
        <begin position="624"/>
        <end position="670"/>
    </location>
</feature>
<feature type="domain" description="PSI 1">
    <location>
        <begin position="702"/>
        <end position="747"/>
    </location>
</feature>
<feature type="domain" description="PSI 2">
    <location>
        <begin position="754"/>
        <end position="793"/>
    </location>
</feature>
<feature type="domain" description="C-type lectin" evidence="4">
    <location>
        <begin position="794"/>
        <end position="918"/>
    </location>
</feature>
<feature type="domain" description="PSI 3">
    <location>
        <begin position="931"/>
        <end position="982"/>
    </location>
</feature>
<feature type="domain" description="PSI 4">
    <location>
        <begin position="985"/>
        <end position="1060"/>
    </location>
</feature>
<feature type="domain" description="Laminin EGF-like 1" evidence="7">
    <location>
        <begin position="1062"/>
        <end position="1107"/>
    </location>
</feature>
<feature type="domain" description="Laminin EGF-like 2" evidence="7">
    <location>
        <begin position="1108"/>
        <end position="1156"/>
    </location>
</feature>
<feature type="region of interest" description="Disordered" evidence="8">
    <location>
        <begin position="15"/>
        <end position="38"/>
    </location>
</feature>
<feature type="glycosylation site" description="N-linked (GlcNAc...) asparagine" evidence="3">
    <location>
        <position position="212"/>
    </location>
</feature>
<feature type="glycosylation site" description="N-linked (GlcNAc...) asparagine" evidence="3">
    <location>
        <position position="236"/>
    </location>
</feature>
<feature type="glycosylation site" description="N-linked (GlcNAc...) asparagine" evidence="3">
    <location>
        <position position="241"/>
    </location>
</feature>
<feature type="glycosylation site" description="N-linked (GlcNAc...) asparagine" evidence="3">
    <location>
        <position position="252"/>
    </location>
</feature>
<feature type="glycosylation site" description="N-linked (GlcNAc...) asparagine" evidence="3">
    <location>
        <position position="263"/>
    </location>
</feature>
<feature type="glycosylation site" description="N-linked (GlcNAc...) asparagine" evidence="3">
    <location>
        <position position="299"/>
    </location>
</feature>
<feature type="glycosylation site" description="N-linked (GlcNAc...) asparagine" evidence="3">
    <location>
        <position position="324"/>
    </location>
</feature>
<feature type="glycosylation site" description="N-linked (GlcNAc...) asparagine" evidence="3">
    <location>
        <position position="361"/>
    </location>
</feature>
<feature type="glycosylation site" description="N-linked (GlcNAc...) asparagine" evidence="3">
    <location>
        <position position="382"/>
    </location>
</feature>
<feature type="glycosylation site" description="N-linked (GlcNAc...) asparagine" evidence="3">
    <location>
        <position position="415"/>
    </location>
</feature>
<feature type="glycosylation site" description="N-linked (GlcNAc...) asparagine" evidence="3">
    <location>
        <position position="427"/>
    </location>
</feature>
<feature type="glycosylation site" description="N-linked (GlcNAc...) asparagine" evidence="3">
    <location>
        <position position="574"/>
    </location>
</feature>
<feature type="glycosylation site" description="N-linked (GlcNAc...) asparagine" evidence="3">
    <location>
        <position position="622"/>
    </location>
</feature>
<feature type="glycosylation site" description="N-linked (GlcNAc...) asparagine" evidence="3">
    <location>
        <position position="730"/>
    </location>
</feature>
<feature type="glycosylation site" description="N-linked (GlcNAc...) asparagine" evidence="3">
    <location>
        <position position="862"/>
    </location>
</feature>
<feature type="glycosylation site" description="N-linked (GlcNAc...) asparagine" evidence="3">
    <location>
        <position position="913"/>
    </location>
</feature>
<feature type="glycosylation site" description="N-linked (GlcNAc...) asparagine" evidence="3">
    <location>
        <position position="922"/>
    </location>
</feature>
<feature type="glycosylation site" description="N-linked (GlcNAc...) asparagine" evidence="3">
    <location>
        <position position="985"/>
    </location>
</feature>
<feature type="glycosylation site" description="N-linked (GlcNAc...) asparagine" evidence="3">
    <location>
        <position position="1042"/>
    </location>
</feature>
<feature type="glycosylation site" description="N-linked (GlcNAc...) asparagine" evidence="3">
    <location>
        <position position="1053"/>
    </location>
</feature>
<feature type="glycosylation site" description="N-linked (GlcNAc...) asparagine" evidence="3">
    <location>
        <position position="1072"/>
    </location>
</feature>
<feature type="glycosylation site" description="N-linked (GlcNAc...) asparagine" evidence="3">
    <location>
        <position position="1197"/>
    </location>
</feature>
<feature type="glycosylation site" description="N-linked (GlcNAc...) asparagine" evidence="3">
    <location>
        <position position="1205"/>
    </location>
</feature>
<feature type="glycosylation site" description="N-linked (GlcNAc...) asparagine" evidence="3">
    <location>
        <position position="1249"/>
    </location>
</feature>
<feature type="glycosylation site" description="N-linked (GlcNAc...) asparagine" evidence="3">
    <location>
        <position position="1258"/>
    </location>
</feature>
<feature type="disulfide bond" evidence="1">
    <location>
        <begin position="100"/>
        <end position="110"/>
    </location>
</feature>
<feature type="disulfide bond" evidence="1">
    <location>
        <begin position="104"/>
        <end position="117"/>
    </location>
</feature>
<feature type="disulfide bond" evidence="1">
    <location>
        <begin position="119"/>
        <end position="128"/>
    </location>
</feature>
<feature type="disulfide bond" evidence="1">
    <location>
        <begin position="131"/>
        <end position="157"/>
    </location>
</feature>
<feature type="disulfide bond" evidence="1">
    <location>
        <begin position="249"/>
        <end position="259"/>
    </location>
</feature>
<feature type="disulfide bond" evidence="1">
    <location>
        <begin position="253"/>
        <end position="270"/>
    </location>
</feature>
<feature type="disulfide bond" evidence="1">
    <location>
        <begin position="272"/>
        <end position="281"/>
    </location>
</feature>
<feature type="disulfide bond" evidence="1">
    <location>
        <begin position="815"/>
        <end position="917"/>
    </location>
</feature>
<feature type="disulfide bond" evidence="1">
    <location>
        <begin position="1062"/>
        <end position="1070"/>
    </location>
</feature>
<feature type="disulfide bond" evidence="1">
    <location>
        <begin position="1064"/>
        <end position="1076"/>
    </location>
</feature>
<feature type="disulfide bond" evidence="1">
    <location>
        <begin position="1079"/>
        <end position="1088"/>
    </location>
</feature>
<feature type="disulfide bond" evidence="1">
    <location>
        <begin position="1091"/>
        <end position="1105"/>
    </location>
</feature>
<feature type="disulfide bond" evidence="1">
    <location>
        <begin position="1108"/>
        <end position="1117"/>
    </location>
</feature>
<feature type="disulfide bond" evidence="1">
    <location>
        <begin position="1110"/>
        <end position="1124"/>
    </location>
</feature>
<feature type="disulfide bond" evidence="1">
    <location>
        <begin position="1126"/>
        <end position="1136"/>
    </location>
</feature>
<feature type="disulfide bond" evidence="1">
    <location>
        <begin position="1139"/>
        <end position="1154"/>
    </location>
</feature>
<feature type="sequence conflict" description="In Ref. 2; AAD25372." evidence="10" ref="2">
    <original>A</original>
    <variation>V</variation>
    <location>
        <position position="6"/>
    </location>
</feature>
<feature type="sequence conflict" description="In Ref. 2; AAD25372." evidence="10" ref="2">
    <original>A</original>
    <variation>S</variation>
    <location>
        <position position="9"/>
    </location>
</feature>
<feature type="sequence conflict" description="In Ref. 1; AAD20947." evidence="10" ref="1">
    <original>A</original>
    <variation>T</variation>
    <location>
        <position position="20"/>
    </location>
</feature>
<feature type="sequence conflict" description="In Ref. 2; AAD25372." evidence="10" ref="2">
    <original>QPNRIM</original>
    <variation>YPNAVL</variation>
    <location>
        <begin position="164"/>
        <end position="169"/>
    </location>
</feature>
<feature type="sequence conflict" description="In Ref. 2; AAD25372." evidence="10" ref="2">
    <original>G</original>
    <variation>A</variation>
    <location>
        <position position="255"/>
    </location>
</feature>
<feature type="sequence conflict" description="In Ref. 2; AAD25372." evidence="10" ref="2">
    <original>V</original>
    <variation>A</variation>
    <location>
        <position position="505"/>
    </location>
</feature>
<feature type="sequence conflict" description="In Ref. 2; AAD25372." evidence="10" ref="2">
    <original>F</original>
    <variation>L</variation>
    <location>
        <position position="833"/>
    </location>
</feature>
<feature type="sequence conflict" description="In Ref. 2; AAD25372." evidence="10" ref="2">
    <original>I</original>
    <variation>V</variation>
    <location>
        <position position="1075"/>
    </location>
</feature>
<feature type="sequence conflict" description="In Ref. 2; AAD25372." evidence="10" ref="2">
    <original>E</original>
    <variation>K</variation>
    <location>
        <position position="1140"/>
    </location>
</feature>
<feature type="sequence conflict" description="In Ref. 2; AAD25372." evidence="10" ref="2">
    <original>E</original>
    <variation>G</variation>
    <location>
        <position position="1171"/>
    </location>
</feature>
<feature type="sequence conflict" description="In Ref. 2; AAD25372." evidence="10" ref="2">
    <original>L</original>
    <variation>F</variation>
    <location>
        <position position="1192"/>
    </location>
</feature>
<feature type="sequence conflict" description="In Ref. 2; AAD25372." evidence="10" ref="2">
    <original>N</original>
    <variation>K</variation>
    <location>
        <position position="1201"/>
    </location>
</feature>
<proteinExistence type="evidence at protein level"/>
<comment type="function">
    <text evidence="1 9">Involved in the initial immune cell clustering during inflammatory response and may regulate chemotactic activity of chemokines (By similarity). May play a role in melanocortin signaling pathways that regulate energy homeostasis and hair color. Low-affinity receptor for agouti. Has a critical role in normal myelination in the central nervous system (By similarity).</text>
</comment>
<comment type="subunit">
    <text evidence="1">Monomer and homotrimer.</text>
</comment>
<comment type="subcellular location">
    <subcellularLocation>
        <location evidence="2">Cell membrane</location>
        <topology evidence="2">Single-pass type I membrane protein</topology>
    </subcellularLocation>
</comment>
<comment type="PTM">
    <text evidence="1">Heavily glycosylated.</text>
</comment>
<comment type="sequence caution" evidence="10">
    <conflict type="frameshift">
        <sequence resource="EMBL-CDS" id="AAD20947"/>
    </conflict>
</comment>
<comment type="online information" name="Functional Glycomics Gateway - Glycan Binding">
    <link uri="http://www.functionalglycomics.org/glycomics/GBPServlet?&amp;operationType=view&amp;cbpId=cbp_mou_Ctlect_150"/>
    <text>Attractin</text>
</comment>
<reference key="1">
    <citation type="journal article" date="1999" name="Nature">
        <title>The mahogany protein is a receptor involved in suppression of obesity.</title>
        <authorList>
            <person name="Nagle D.L."/>
            <person name="McGrail S.H."/>
            <person name="Vitale J."/>
            <person name="Woolf E.A."/>
            <person name="Dussault B.J. Jr."/>
            <person name="DiRocco L."/>
            <person name="Holmgren L."/>
            <person name="Montagno J."/>
            <person name="Bork P."/>
            <person name="Huszar D."/>
            <person name="Fairchild-Huntress V."/>
            <person name="Ge P."/>
            <person name="Keilty J."/>
            <person name="Ebeling C."/>
            <person name="Baldini L."/>
            <person name="Gilchrist J."/>
            <person name="Burn P."/>
            <person name="Carlson G.A."/>
            <person name="Moore K.J."/>
        </authorList>
    </citation>
    <scope>NUCLEOTIDE SEQUENCE [MRNA]</scope>
</reference>
<reference key="2">
    <citation type="journal article" date="1999" name="Nature">
        <title>The mouse mahogany locus encodes a transmembrane form of human attractin.</title>
        <authorList>
            <person name="Gunn T.M."/>
            <person name="Miller K.A."/>
            <person name="He L."/>
            <person name="Hyman R.W."/>
            <person name="Davis R.W."/>
            <person name="Azarani A."/>
            <person name="Schlossman S.F."/>
            <person name="Duke-Cohan J.S."/>
            <person name="Barsh G.S."/>
        </authorList>
    </citation>
    <scope>NUCLEOTIDE SEQUENCE [GENOMIC DNA / MRNA]</scope>
</reference>
<reference key="3">
    <citation type="journal article" date="2009" name="PLoS Biol.">
        <title>Lineage-specific biology revealed by a finished genome assembly of the mouse.</title>
        <authorList>
            <person name="Church D.M."/>
            <person name="Goodstadt L."/>
            <person name="Hillier L.W."/>
            <person name="Zody M.C."/>
            <person name="Goldstein S."/>
            <person name="She X."/>
            <person name="Bult C.J."/>
            <person name="Agarwala R."/>
            <person name="Cherry J.L."/>
            <person name="DiCuccio M."/>
            <person name="Hlavina W."/>
            <person name="Kapustin Y."/>
            <person name="Meric P."/>
            <person name="Maglott D."/>
            <person name="Birtle Z."/>
            <person name="Marques A.C."/>
            <person name="Graves T."/>
            <person name="Zhou S."/>
            <person name="Teague B."/>
            <person name="Potamousis K."/>
            <person name="Churas C."/>
            <person name="Place M."/>
            <person name="Herschleb J."/>
            <person name="Runnheim R."/>
            <person name="Forrest D."/>
            <person name="Amos-Landgraf J."/>
            <person name="Schwartz D.C."/>
            <person name="Cheng Z."/>
            <person name="Lindblad-Toh K."/>
            <person name="Eichler E.E."/>
            <person name="Ponting C.P."/>
        </authorList>
    </citation>
    <scope>NUCLEOTIDE SEQUENCE [LARGE SCALE GENOMIC DNA]</scope>
    <source>
        <strain>C57BL/6J</strain>
    </source>
</reference>
<reference key="4">
    <citation type="submission" date="2005-07" db="EMBL/GenBank/DDBJ databases">
        <authorList>
            <person name="Mural R.J."/>
            <person name="Adams M.D."/>
            <person name="Myers E.W."/>
            <person name="Smith H.O."/>
            <person name="Venter J.C."/>
        </authorList>
    </citation>
    <scope>NUCLEOTIDE SEQUENCE [LARGE SCALE GENOMIC DNA]</scope>
</reference>
<reference key="5">
    <citation type="journal article" date="2001" name="Nat. Genet.">
        <title>A biochemical function for attractin in agouti-induced pigmentation and obesity.</title>
        <authorList>
            <person name="He L."/>
            <person name="Gunn T.M."/>
            <person name="Bouley D.M."/>
            <person name="Lu X.Y."/>
            <person name="Watson S.J."/>
            <person name="Schlossman S.F."/>
            <person name="Duke-Cohan J.S."/>
            <person name="Barsh G.S."/>
        </authorList>
    </citation>
    <scope>FUNCTION</scope>
</reference>
<reference key="6">
    <citation type="journal article" date="2010" name="Cell">
        <title>A tissue-specific atlas of mouse protein phosphorylation and expression.</title>
        <authorList>
            <person name="Huttlin E.L."/>
            <person name="Jedrychowski M.P."/>
            <person name="Elias J.E."/>
            <person name="Goswami T."/>
            <person name="Rad R."/>
            <person name="Beausoleil S.A."/>
            <person name="Villen J."/>
            <person name="Haas W."/>
            <person name="Sowa M.E."/>
            <person name="Gygi S.P."/>
        </authorList>
    </citation>
    <scope>IDENTIFICATION BY MASS SPECTROMETRY [LARGE SCALE ANALYSIS]</scope>
    <source>
        <tissue>Brain</tissue>
    </source>
</reference>
<protein>
    <recommendedName>
        <fullName>Attractin</fullName>
    </recommendedName>
    <alternativeName>
        <fullName>Protein mahogany</fullName>
    </alternativeName>
</protein>